<name>KEG1_RAT</name>
<feature type="chain" id="PRO_0000281877" description="Glycine N-acyltransferase-like protein Keg1">
    <location>
        <begin position="1"/>
        <end position="295"/>
    </location>
</feature>
<feature type="modified residue" description="N6-acetyllysine; alternate" evidence="2">
    <location>
        <position position="41"/>
    </location>
</feature>
<feature type="modified residue" description="N6-succinyllysine; alternate" evidence="2">
    <location>
        <position position="41"/>
    </location>
</feature>
<feature type="modified residue" description="N6-acetyllysine" evidence="3">
    <location>
        <position position="43"/>
    </location>
</feature>
<feature type="modified residue" description="N6-acetyllysine; alternate" evidence="2">
    <location>
        <position position="48"/>
    </location>
</feature>
<feature type="modified residue" description="N6-succinyllysine; alternate" evidence="2">
    <location>
        <position position="48"/>
    </location>
</feature>
<feature type="modified residue" description="N6-acetyllysine" evidence="2">
    <location>
        <position position="80"/>
    </location>
</feature>
<feature type="modified residue" description="N6-acetyllysine" evidence="3">
    <location>
        <position position="83"/>
    </location>
</feature>
<feature type="modified residue" description="N6-acetyllysine; alternate" evidence="3">
    <location>
        <position position="124"/>
    </location>
</feature>
<feature type="modified residue" description="N6-succinyllysine; alternate" evidence="3">
    <location>
        <position position="124"/>
    </location>
</feature>
<feature type="modified residue" description="N6-acetyllysine; alternate" evidence="3">
    <location>
        <position position="128"/>
    </location>
</feature>
<feature type="modified residue" description="N6-succinyllysine; alternate" evidence="3">
    <location>
        <position position="128"/>
    </location>
</feature>
<feature type="modified residue" description="N6-acetyllysine; alternate" evidence="3">
    <location>
        <position position="140"/>
    </location>
</feature>
<feature type="modified residue" description="N6-succinyllysine; alternate" evidence="3">
    <location>
        <position position="140"/>
    </location>
</feature>
<feature type="modified residue" description="N6-acetyllysine" evidence="3">
    <location>
        <position position="150"/>
    </location>
</feature>
<feature type="modified residue" description="N6-acetyllysine; alternate" evidence="2">
    <location>
        <position position="255"/>
    </location>
</feature>
<feature type="modified residue" description="N6-succinyllysine; alternate" evidence="2">
    <location>
        <position position="255"/>
    </location>
</feature>
<feature type="sequence conflict" description="In Ref. 1; BAA34427." evidence="5" ref="1">
    <original>A</original>
    <variation>S</variation>
    <location>
        <position position="108"/>
    </location>
</feature>
<evidence type="ECO:0000250" key="1"/>
<evidence type="ECO:0000250" key="2">
    <source>
        <dbReference type="UniProtKB" id="Q5FW57"/>
    </source>
</evidence>
<evidence type="ECO:0000250" key="3">
    <source>
        <dbReference type="UniProtKB" id="Q9DCY0"/>
    </source>
</evidence>
<evidence type="ECO:0000269" key="4">
    <source>
    </source>
</evidence>
<evidence type="ECO:0000305" key="5"/>
<protein>
    <recommendedName>
        <fullName>Glycine N-acyltransferase-like protein Keg1</fullName>
        <ecNumber>2.3.1.13</ecNumber>
    </recommendedName>
    <alternativeName>
        <fullName>Acyl-CoA:glycine N-acyltransferase protein Keg1</fullName>
    </alternativeName>
    <alternativeName>
        <fullName>Hepatocellular carcinoma-enriched protein of 33 kDa</fullName>
        <shortName>HP33</shortName>
    </alternativeName>
    <alternativeName>
        <fullName>Kidney-expressed gene 1 protein</fullName>
    </alternativeName>
</protein>
<comment type="function">
    <text evidence="1">Acyltransferase which transfers the acyl group to the N-terminus of glycine. Can conjugate a multitude of substrates to form a variety of N-acylglycines (By similarity).</text>
</comment>
<comment type="catalytic activity">
    <reaction>
        <text>an acyl-CoA + glycine = an N-acylglycine + CoA + H(+)</text>
        <dbReference type="Rhea" id="RHEA:19869"/>
        <dbReference type="ChEBI" id="CHEBI:15378"/>
        <dbReference type="ChEBI" id="CHEBI:57287"/>
        <dbReference type="ChEBI" id="CHEBI:57305"/>
        <dbReference type="ChEBI" id="CHEBI:57670"/>
        <dbReference type="ChEBI" id="CHEBI:58342"/>
        <dbReference type="EC" id="2.3.1.13"/>
    </reaction>
</comment>
<comment type="subunit">
    <text>Binds to microtubules.</text>
</comment>
<comment type="subcellular location">
    <subcellularLocation>
        <location evidence="4">Cytoplasm</location>
        <location evidence="4">Cytoskeleton</location>
        <location evidence="4">Microtubule organizing center</location>
        <location evidence="4">Centrosome</location>
    </subcellularLocation>
    <text>Also localizes in regions surrounding the centrosome. The centrosomal localization is dependent on microtubules.</text>
</comment>
<comment type="tissue specificity">
    <text evidence="4">Specifically expressed in kidney and liver. Up-regulated in the regenerating liver as well as in hepatocellular carcinoma.</text>
</comment>
<comment type="similarity">
    <text evidence="5">Belongs to the glycine N-acyltransferase family.</text>
</comment>
<sequence length="295" mass="34016">MFYIQSSEALQILKNSLRKHLPESLKVYGTVFHMNQGNPFKLKAVVDKWPDFNTVVIRPQEQDMTDDLDHYNNTYLIYSKDPKHCQEFLGSSDVINWKQHLQIQSSQADLGKVIENLGATNLGKVKHKQCFLYMVSHTAKKLTPSLVDAKHLVVSSEKPTPFDHQLFKFARLDVKHAALVNSIWYFGGNEKSQKFIERCIFTFPSVCIMGPEGTPVSWALMDHTGELRMAGTLPKYRHQNLIYHVAFHQVHTLEKLGFPMYLHVDKVNLTIQRMSAVLGHVPMPCTWNQWNWVPL</sequence>
<proteinExistence type="evidence at protein level"/>
<organism>
    <name type="scientific">Rattus norvegicus</name>
    <name type="common">Rat</name>
    <dbReference type="NCBI Taxonomy" id="10116"/>
    <lineage>
        <taxon>Eukaryota</taxon>
        <taxon>Metazoa</taxon>
        <taxon>Chordata</taxon>
        <taxon>Craniata</taxon>
        <taxon>Vertebrata</taxon>
        <taxon>Euteleostomi</taxon>
        <taxon>Mammalia</taxon>
        <taxon>Eutheria</taxon>
        <taxon>Euarchontoglires</taxon>
        <taxon>Glires</taxon>
        <taxon>Rodentia</taxon>
        <taxon>Myomorpha</taxon>
        <taxon>Muroidea</taxon>
        <taxon>Muridae</taxon>
        <taxon>Murinae</taxon>
        <taxon>Rattus</taxon>
    </lineage>
</organism>
<gene>
    <name type="primary">Keg1</name>
    <name type="synonym">Hp33</name>
</gene>
<dbReference type="EC" id="2.3.1.13"/>
<dbReference type="EMBL" id="AB019693">
    <property type="protein sequence ID" value="BAA34427.1"/>
    <property type="molecule type" value="mRNA"/>
</dbReference>
<dbReference type="EMBL" id="BC078701">
    <property type="protein sequence ID" value="AAH78701.1"/>
    <property type="molecule type" value="mRNA"/>
</dbReference>
<dbReference type="RefSeq" id="NP_599157.2">
    <property type="nucleotide sequence ID" value="NM_134330.2"/>
</dbReference>
<dbReference type="SMR" id="Q9Z2Y0"/>
<dbReference type="FunCoup" id="Q9Z2Y0">
    <property type="interactions" value="2"/>
</dbReference>
<dbReference type="STRING" id="10116.ENSRNOP00000016593"/>
<dbReference type="iPTMnet" id="Q9Z2Y0"/>
<dbReference type="PhosphoSitePlus" id="Q9Z2Y0"/>
<dbReference type="PaxDb" id="10116-ENSRNOP00000016593"/>
<dbReference type="Ensembl" id="ENSRNOT00000016593.7">
    <property type="protein sequence ID" value="ENSRNOP00000016593.4"/>
    <property type="gene ID" value="ENSRNOG00000012387.7"/>
</dbReference>
<dbReference type="GeneID" id="171179"/>
<dbReference type="KEGG" id="rno:171179"/>
<dbReference type="UCSC" id="RGD:621231">
    <property type="organism name" value="rat"/>
</dbReference>
<dbReference type="AGR" id="RGD:621231"/>
<dbReference type="CTD" id="219970"/>
<dbReference type="RGD" id="621231">
    <property type="gene designation" value="Keg1"/>
</dbReference>
<dbReference type="eggNOG" id="ENOG502SDQB">
    <property type="taxonomic scope" value="Eukaryota"/>
</dbReference>
<dbReference type="GeneTree" id="ENSGT00950000183133"/>
<dbReference type="HOGENOM" id="CLU_060336_0_0_1"/>
<dbReference type="InParanoid" id="Q9Z2Y0"/>
<dbReference type="OMA" id="HTQCFLY"/>
<dbReference type="OrthoDB" id="37356at9989"/>
<dbReference type="PhylomeDB" id="Q9Z2Y0"/>
<dbReference type="TreeFam" id="TF353258"/>
<dbReference type="PRO" id="PR:Q9Z2Y0"/>
<dbReference type="Proteomes" id="UP000002494">
    <property type="component" value="Chromosome 1"/>
</dbReference>
<dbReference type="Bgee" id="ENSRNOG00000012387">
    <property type="expression patterns" value="Expressed in adult mammalian kidney and 2 other cell types or tissues"/>
</dbReference>
<dbReference type="GO" id="GO:0005813">
    <property type="term" value="C:centrosome"/>
    <property type="evidence" value="ECO:0000314"/>
    <property type="project" value="RGD"/>
</dbReference>
<dbReference type="GO" id="GO:0005874">
    <property type="term" value="C:microtubule"/>
    <property type="evidence" value="ECO:0007669"/>
    <property type="project" value="UniProtKB-KW"/>
</dbReference>
<dbReference type="GO" id="GO:0005739">
    <property type="term" value="C:mitochondrion"/>
    <property type="evidence" value="ECO:0000250"/>
    <property type="project" value="UniProtKB"/>
</dbReference>
<dbReference type="GO" id="GO:0043015">
    <property type="term" value="F:gamma-tubulin binding"/>
    <property type="evidence" value="ECO:0000303"/>
    <property type="project" value="UniProtKB"/>
</dbReference>
<dbReference type="GO" id="GO:0047961">
    <property type="term" value="F:glycine N-acyltransferase activity"/>
    <property type="evidence" value="ECO:0007669"/>
    <property type="project" value="UniProtKB-EC"/>
</dbReference>
<dbReference type="GO" id="GO:0016410">
    <property type="term" value="F:N-acyltransferase activity"/>
    <property type="evidence" value="ECO:0000318"/>
    <property type="project" value="GO_Central"/>
</dbReference>
<dbReference type="Gene3D" id="3.40.630.30">
    <property type="match status" value="1"/>
</dbReference>
<dbReference type="InterPro" id="IPR016181">
    <property type="entry name" value="Acyl_CoA_acyltransferase"/>
</dbReference>
<dbReference type="InterPro" id="IPR010313">
    <property type="entry name" value="Glycine_N-acyltransferase"/>
</dbReference>
<dbReference type="InterPro" id="IPR013652">
    <property type="entry name" value="Glycine_N-acyltransferase_C"/>
</dbReference>
<dbReference type="InterPro" id="IPR015938">
    <property type="entry name" value="Glycine_N-acyltransferase_N"/>
</dbReference>
<dbReference type="PANTHER" id="PTHR15298:SF13">
    <property type="entry name" value="GLYCINE N-ACYLTRANSFERASE-LIKE PROTEIN KEG1"/>
    <property type="match status" value="1"/>
</dbReference>
<dbReference type="PANTHER" id="PTHR15298">
    <property type="entry name" value="L-COA N-ACYLTRANSFERASE-RELATED"/>
    <property type="match status" value="1"/>
</dbReference>
<dbReference type="Pfam" id="PF08444">
    <property type="entry name" value="Gly_acyl_tr_C"/>
    <property type="match status" value="1"/>
</dbReference>
<dbReference type="Pfam" id="PF06021">
    <property type="entry name" value="Gly_acyl_tr_N"/>
    <property type="match status" value="1"/>
</dbReference>
<dbReference type="SUPFAM" id="SSF55729">
    <property type="entry name" value="Acyl-CoA N-acyltransferases (Nat)"/>
    <property type="match status" value="1"/>
</dbReference>
<keyword id="KW-0007">Acetylation</keyword>
<keyword id="KW-0012">Acyltransferase</keyword>
<keyword id="KW-0963">Cytoplasm</keyword>
<keyword id="KW-0206">Cytoskeleton</keyword>
<keyword id="KW-0493">Microtubule</keyword>
<keyword id="KW-1185">Reference proteome</keyword>
<keyword id="KW-0808">Transferase</keyword>
<reference key="1">
    <citation type="journal article" date="1999" name="J. Cell Sci.">
        <title>HP33: hepatocellular carcinoma-enriched 33-kDa protein with similarity to mitochondrial N-acyltransferase but localized in a microtubule-dependent manner at the centrosome.</title>
        <authorList>
            <person name="Nakadai T."/>
            <person name="Kishimoto T."/>
            <person name="Miyazawa Y."/>
            <person name="Okada N."/>
            <person name="Makino Y."/>
            <person name="Obinata T."/>
            <person name="Tamura T."/>
        </authorList>
    </citation>
    <scope>NUCLEOTIDE SEQUENCE [MRNA]</scope>
    <scope>SUBCELLULAR LOCATION</scope>
    <scope>TISSUE SPECIFICITY</scope>
    <source>
        <strain>Wistar</strain>
        <tissue>Liver</tissue>
    </source>
</reference>
<reference key="2">
    <citation type="journal article" date="2004" name="Genome Res.">
        <title>The status, quality, and expansion of the NIH full-length cDNA project: the Mammalian Gene Collection (MGC).</title>
        <authorList>
            <consortium name="The MGC Project Team"/>
        </authorList>
    </citation>
    <scope>NUCLEOTIDE SEQUENCE [LARGE SCALE MRNA]</scope>
    <source>
        <tissue>Kidney</tissue>
    </source>
</reference>
<reference key="3">
    <citation type="journal article" date="1999" name="DNA Res.">
        <title>Structure of rat gamma-tubulin and its binding to HP33.</title>
        <authorList>
            <person name="Nakadai T."/>
            <person name="Okada N."/>
            <person name="Makino Y."/>
            <person name="Tamura T."/>
        </authorList>
    </citation>
    <scope>INTERACTION WITH GAMMA-TUBULIN</scope>
</reference>
<accession>Q9Z2Y0</accession>
<accession>Q68G42</accession>